<evidence type="ECO:0000250" key="1"/>
<evidence type="ECO:0000255" key="2">
    <source>
        <dbReference type="HAMAP-Rule" id="MF_00103"/>
    </source>
</evidence>
<reference key="1">
    <citation type="journal article" date="2001" name="Nature">
        <title>Genome sequence of enterohaemorrhagic Escherichia coli O157:H7.</title>
        <authorList>
            <person name="Perna N.T."/>
            <person name="Plunkett G. III"/>
            <person name="Burland V."/>
            <person name="Mau B."/>
            <person name="Glasner J.D."/>
            <person name="Rose D.J."/>
            <person name="Mayhew G.F."/>
            <person name="Evans P.S."/>
            <person name="Gregor J."/>
            <person name="Kirkpatrick H.A."/>
            <person name="Posfai G."/>
            <person name="Hackett J."/>
            <person name="Klink S."/>
            <person name="Boutin A."/>
            <person name="Shao Y."/>
            <person name="Miller L."/>
            <person name="Grotbeck E.J."/>
            <person name="Davis N.W."/>
            <person name="Lim A."/>
            <person name="Dimalanta E.T."/>
            <person name="Potamousis K."/>
            <person name="Apodaca J."/>
            <person name="Anantharaman T.S."/>
            <person name="Lin J."/>
            <person name="Yen G."/>
            <person name="Schwartz D.C."/>
            <person name="Welch R.A."/>
            <person name="Blattner F.R."/>
        </authorList>
    </citation>
    <scope>NUCLEOTIDE SEQUENCE [LARGE SCALE GENOMIC DNA]</scope>
    <source>
        <strain>O157:H7 / EDL933 / ATCC 700927 / EHEC</strain>
    </source>
</reference>
<reference key="2">
    <citation type="journal article" date="2001" name="DNA Res.">
        <title>Complete genome sequence of enterohemorrhagic Escherichia coli O157:H7 and genomic comparison with a laboratory strain K-12.</title>
        <authorList>
            <person name="Hayashi T."/>
            <person name="Makino K."/>
            <person name="Ohnishi M."/>
            <person name="Kurokawa K."/>
            <person name="Ishii K."/>
            <person name="Yokoyama K."/>
            <person name="Han C.-G."/>
            <person name="Ohtsubo E."/>
            <person name="Nakayama K."/>
            <person name="Murata T."/>
            <person name="Tanaka M."/>
            <person name="Tobe T."/>
            <person name="Iida T."/>
            <person name="Takami H."/>
            <person name="Honda T."/>
            <person name="Sasakawa C."/>
            <person name="Ogasawara N."/>
            <person name="Yasunaga T."/>
            <person name="Kuhara S."/>
            <person name="Shiba T."/>
            <person name="Hattori M."/>
            <person name="Shinagawa H."/>
        </authorList>
    </citation>
    <scope>NUCLEOTIDE SEQUENCE [LARGE SCALE GENOMIC DNA]</scope>
    <source>
        <strain>O157:H7 / Sakai / RIMD 0509952 / EHEC</strain>
    </source>
</reference>
<protein>
    <recommendedName>
        <fullName evidence="2">Formamidopyrimidine-DNA glycosylase</fullName>
        <shortName evidence="2">Fapy-DNA glycosylase</shortName>
        <ecNumber evidence="2">3.2.2.23</ecNumber>
    </recommendedName>
    <alternativeName>
        <fullName evidence="2">DNA-(apurinic or apyrimidinic site) lyase MutM</fullName>
        <shortName evidence="2">AP lyase MutM</shortName>
        <ecNumber evidence="2">4.2.99.18</ecNumber>
    </alternativeName>
</protein>
<comment type="function">
    <text evidence="2">Involved in base excision repair of DNA damaged by oxidation or by mutagenic agents. Acts as a DNA glycosylase that recognizes and removes damaged bases. Has a preference for oxidized purines, such as 7,8-dihydro-8-oxoguanine (8-oxoG). Has AP (apurinic/apyrimidinic) lyase activity and introduces nicks in the DNA strand. Cleaves the DNA backbone by beta-delta elimination to generate a single-strand break at the site of the removed base with both 3'- and 5'-phosphates.</text>
</comment>
<comment type="catalytic activity">
    <reaction evidence="2">
        <text>Hydrolysis of DNA containing ring-opened 7-methylguanine residues, releasing 2,6-diamino-4-hydroxy-5-(N-methyl)formamidopyrimidine.</text>
        <dbReference type="EC" id="3.2.2.23"/>
    </reaction>
</comment>
<comment type="catalytic activity">
    <reaction evidence="2">
        <text>2'-deoxyribonucleotide-(2'-deoxyribose 5'-phosphate)-2'-deoxyribonucleotide-DNA = a 3'-end 2'-deoxyribonucleotide-(2,3-dehydro-2,3-deoxyribose 5'-phosphate)-DNA + a 5'-end 5'-phospho-2'-deoxyribonucleoside-DNA + H(+)</text>
        <dbReference type="Rhea" id="RHEA:66592"/>
        <dbReference type="Rhea" id="RHEA-COMP:13180"/>
        <dbReference type="Rhea" id="RHEA-COMP:16897"/>
        <dbReference type="Rhea" id="RHEA-COMP:17067"/>
        <dbReference type="ChEBI" id="CHEBI:15378"/>
        <dbReference type="ChEBI" id="CHEBI:136412"/>
        <dbReference type="ChEBI" id="CHEBI:157695"/>
        <dbReference type="ChEBI" id="CHEBI:167181"/>
        <dbReference type="EC" id="4.2.99.18"/>
    </reaction>
</comment>
<comment type="cofactor">
    <cofactor evidence="2">
        <name>Zn(2+)</name>
        <dbReference type="ChEBI" id="CHEBI:29105"/>
    </cofactor>
    <text evidence="2">Binds 1 zinc ion per subunit.</text>
</comment>
<comment type="subunit">
    <text evidence="2">Monomer.</text>
</comment>
<comment type="similarity">
    <text evidence="2">Belongs to the FPG family.</text>
</comment>
<feature type="initiator methionine" description="Removed" evidence="1">
    <location>
        <position position="1"/>
    </location>
</feature>
<feature type="chain" id="PRO_0000170824" description="Formamidopyrimidine-DNA glycosylase">
    <location>
        <begin position="2"/>
        <end position="269"/>
    </location>
</feature>
<feature type="zinc finger region" description="FPG-type" evidence="2">
    <location>
        <begin position="235"/>
        <end position="269"/>
    </location>
</feature>
<feature type="active site" description="Schiff-base intermediate with DNA" evidence="2">
    <location>
        <position position="2"/>
    </location>
</feature>
<feature type="active site" description="Proton donor" evidence="2">
    <location>
        <position position="3"/>
    </location>
</feature>
<feature type="active site" description="Proton donor; for beta-elimination activity" evidence="2">
    <location>
        <position position="57"/>
    </location>
</feature>
<feature type="active site" description="Proton donor; for delta-elimination activity" evidence="2">
    <location>
        <position position="259"/>
    </location>
</feature>
<feature type="binding site" evidence="2">
    <location>
        <position position="90"/>
    </location>
    <ligand>
        <name>DNA</name>
        <dbReference type="ChEBI" id="CHEBI:16991"/>
    </ligand>
</feature>
<feature type="binding site" evidence="2">
    <location>
        <position position="109"/>
    </location>
    <ligand>
        <name>DNA</name>
        <dbReference type="ChEBI" id="CHEBI:16991"/>
    </ligand>
</feature>
<feature type="binding site" evidence="2">
    <location>
        <position position="150"/>
    </location>
    <ligand>
        <name>DNA</name>
        <dbReference type="ChEBI" id="CHEBI:16991"/>
    </ligand>
</feature>
<organism>
    <name type="scientific">Escherichia coli O157:H7</name>
    <dbReference type="NCBI Taxonomy" id="83334"/>
    <lineage>
        <taxon>Bacteria</taxon>
        <taxon>Pseudomonadati</taxon>
        <taxon>Pseudomonadota</taxon>
        <taxon>Gammaproteobacteria</taxon>
        <taxon>Enterobacterales</taxon>
        <taxon>Enterobacteriaceae</taxon>
        <taxon>Escherichia</taxon>
    </lineage>
</organism>
<accession>P64148</accession>
<accession>Q8XDA9</accession>
<keyword id="KW-0227">DNA damage</keyword>
<keyword id="KW-0234">DNA repair</keyword>
<keyword id="KW-0238">DNA-binding</keyword>
<keyword id="KW-0326">Glycosidase</keyword>
<keyword id="KW-0378">Hydrolase</keyword>
<keyword id="KW-0456">Lyase</keyword>
<keyword id="KW-0479">Metal-binding</keyword>
<keyword id="KW-0511">Multifunctional enzyme</keyword>
<keyword id="KW-1185">Reference proteome</keyword>
<keyword id="KW-0862">Zinc</keyword>
<keyword id="KW-0863">Zinc-finger</keyword>
<gene>
    <name evidence="2" type="primary">mutM</name>
    <name evidence="2" type="synonym">fpg</name>
    <name type="ordered locus">Z5059</name>
    <name type="ordered locus">ECs4510</name>
</gene>
<sequence length="269" mass="30260">MPELPEVETSRRGIEPHLVGATILHAVVRNGRLRWPVSEEIYRLSDQPVLSVQRRAKYLLLELPEGWIIIHLGMSGSLRILPEELPPEKHDHVDLVMSNGKVLRYTDPRRFGAWLWTKELEGHNVLAHLGPEPLSDDFNGEYLHQKCAKKKTAIKPWLMDNKLVVGVGNIYASESLFAAGIHPDRLASSLSLAECELLARVIKAVLLRSIEQGGTTLKDFLQSDGKPGYFAQELQVYGRKGEPCRVCGTPIVATKHAQRATFYCRQCQK</sequence>
<proteinExistence type="inferred from homology"/>
<name>FPG_ECO57</name>
<dbReference type="EC" id="3.2.2.23" evidence="2"/>
<dbReference type="EC" id="4.2.99.18" evidence="2"/>
<dbReference type="EMBL" id="AE005174">
    <property type="protein sequence ID" value="AAG58779.1"/>
    <property type="molecule type" value="Genomic_DNA"/>
</dbReference>
<dbReference type="EMBL" id="BA000007">
    <property type="protein sequence ID" value="BAB37933.1"/>
    <property type="molecule type" value="Genomic_DNA"/>
</dbReference>
<dbReference type="PIR" id="F91192">
    <property type="entry name" value="F91192"/>
</dbReference>
<dbReference type="PIR" id="G86039">
    <property type="entry name" value="G86039"/>
</dbReference>
<dbReference type="RefSeq" id="NP_312537.1">
    <property type="nucleotide sequence ID" value="NC_002695.1"/>
</dbReference>
<dbReference type="RefSeq" id="WP_001114533.1">
    <property type="nucleotide sequence ID" value="NZ_VOAI01000021.1"/>
</dbReference>
<dbReference type="SMR" id="P64148"/>
<dbReference type="STRING" id="155864.Z5059"/>
<dbReference type="GeneID" id="915538"/>
<dbReference type="GeneID" id="93778348"/>
<dbReference type="KEGG" id="ece:Z5059"/>
<dbReference type="KEGG" id="ecs:ECs_4510"/>
<dbReference type="PATRIC" id="fig|386585.9.peg.4726"/>
<dbReference type="eggNOG" id="COG0266">
    <property type="taxonomic scope" value="Bacteria"/>
</dbReference>
<dbReference type="HOGENOM" id="CLU_038423_1_1_6"/>
<dbReference type="OMA" id="WMNRSSY"/>
<dbReference type="Proteomes" id="UP000000558">
    <property type="component" value="Chromosome"/>
</dbReference>
<dbReference type="Proteomes" id="UP000002519">
    <property type="component" value="Chromosome"/>
</dbReference>
<dbReference type="GO" id="GO:0034039">
    <property type="term" value="F:8-oxo-7,8-dihydroguanine DNA N-glycosylase activity"/>
    <property type="evidence" value="ECO:0007669"/>
    <property type="project" value="TreeGrafter"/>
</dbReference>
<dbReference type="GO" id="GO:0140078">
    <property type="term" value="F:class I DNA-(apurinic or apyrimidinic site) endonuclease activity"/>
    <property type="evidence" value="ECO:0007669"/>
    <property type="project" value="UniProtKB-EC"/>
</dbReference>
<dbReference type="GO" id="GO:0003684">
    <property type="term" value="F:damaged DNA binding"/>
    <property type="evidence" value="ECO:0007669"/>
    <property type="project" value="InterPro"/>
</dbReference>
<dbReference type="GO" id="GO:0008270">
    <property type="term" value="F:zinc ion binding"/>
    <property type="evidence" value="ECO:0007669"/>
    <property type="project" value="UniProtKB-UniRule"/>
</dbReference>
<dbReference type="GO" id="GO:0006284">
    <property type="term" value="P:base-excision repair"/>
    <property type="evidence" value="ECO:0007669"/>
    <property type="project" value="InterPro"/>
</dbReference>
<dbReference type="CDD" id="cd08966">
    <property type="entry name" value="EcFpg-like_N"/>
    <property type="match status" value="1"/>
</dbReference>
<dbReference type="FunFam" id="1.10.8.50:FF:000003">
    <property type="entry name" value="Formamidopyrimidine-DNA glycosylase"/>
    <property type="match status" value="1"/>
</dbReference>
<dbReference type="FunFam" id="3.20.190.10:FF:000001">
    <property type="entry name" value="Formamidopyrimidine-DNA glycosylase"/>
    <property type="match status" value="1"/>
</dbReference>
<dbReference type="Gene3D" id="1.10.8.50">
    <property type="match status" value="1"/>
</dbReference>
<dbReference type="Gene3D" id="3.20.190.10">
    <property type="entry name" value="MutM-like, N-terminal"/>
    <property type="match status" value="1"/>
</dbReference>
<dbReference type="HAMAP" id="MF_00103">
    <property type="entry name" value="Fapy_DNA_glycosyl"/>
    <property type="match status" value="1"/>
</dbReference>
<dbReference type="InterPro" id="IPR015886">
    <property type="entry name" value="DNA_glyclase/AP_lyase_DNA-bd"/>
</dbReference>
<dbReference type="InterPro" id="IPR015887">
    <property type="entry name" value="DNA_glyclase_Znf_dom_DNA_BS"/>
</dbReference>
<dbReference type="InterPro" id="IPR020629">
    <property type="entry name" value="Formamido-pyr_DNA_Glyclase"/>
</dbReference>
<dbReference type="InterPro" id="IPR012319">
    <property type="entry name" value="FPG_cat"/>
</dbReference>
<dbReference type="InterPro" id="IPR035937">
    <property type="entry name" value="MutM-like_N-ter"/>
</dbReference>
<dbReference type="InterPro" id="IPR010979">
    <property type="entry name" value="Ribosomal_uS13-like_H2TH"/>
</dbReference>
<dbReference type="InterPro" id="IPR000214">
    <property type="entry name" value="Znf_DNA_glyclase/AP_lyase"/>
</dbReference>
<dbReference type="InterPro" id="IPR010663">
    <property type="entry name" value="Znf_FPG/IleRS"/>
</dbReference>
<dbReference type="NCBIfam" id="TIGR00577">
    <property type="entry name" value="fpg"/>
    <property type="match status" value="1"/>
</dbReference>
<dbReference type="NCBIfam" id="NF002211">
    <property type="entry name" value="PRK01103.1"/>
    <property type="match status" value="1"/>
</dbReference>
<dbReference type="PANTHER" id="PTHR22993">
    <property type="entry name" value="FORMAMIDOPYRIMIDINE-DNA GLYCOSYLASE"/>
    <property type="match status" value="1"/>
</dbReference>
<dbReference type="PANTHER" id="PTHR22993:SF9">
    <property type="entry name" value="FORMAMIDOPYRIMIDINE-DNA GLYCOSYLASE"/>
    <property type="match status" value="1"/>
</dbReference>
<dbReference type="Pfam" id="PF01149">
    <property type="entry name" value="Fapy_DNA_glyco"/>
    <property type="match status" value="1"/>
</dbReference>
<dbReference type="Pfam" id="PF06831">
    <property type="entry name" value="H2TH"/>
    <property type="match status" value="1"/>
</dbReference>
<dbReference type="Pfam" id="PF06827">
    <property type="entry name" value="zf-FPG_IleRS"/>
    <property type="match status" value="1"/>
</dbReference>
<dbReference type="SMART" id="SM00898">
    <property type="entry name" value="Fapy_DNA_glyco"/>
    <property type="match status" value="1"/>
</dbReference>
<dbReference type="SMART" id="SM01232">
    <property type="entry name" value="H2TH"/>
    <property type="match status" value="1"/>
</dbReference>
<dbReference type="SUPFAM" id="SSF57716">
    <property type="entry name" value="Glucocorticoid receptor-like (DNA-binding domain)"/>
    <property type="match status" value="1"/>
</dbReference>
<dbReference type="SUPFAM" id="SSF81624">
    <property type="entry name" value="N-terminal domain of MutM-like DNA repair proteins"/>
    <property type="match status" value="1"/>
</dbReference>
<dbReference type="SUPFAM" id="SSF46946">
    <property type="entry name" value="S13-like H2TH domain"/>
    <property type="match status" value="1"/>
</dbReference>
<dbReference type="PROSITE" id="PS51068">
    <property type="entry name" value="FPG_CAT"/>
    <property type="match status" value="1"/>
</dbReference>
<dbReference type="PROSITE" id="PS01242">
    <property type="entry name" value="ZF_FPG_1"/>
    <property type="match status" value="1"/>
</dbReference>
<dbReference type="PROSITE" id="PS51066">
    <property type="entry name" value="ZF_FPG_2"/>
    <property type="match status" value="1"/>
</dbReference>